<evidence type="ECO:0000250" key="1"/>
<evidence type="ECO:0000250" key="2">
    <source>
        <dbReference type="UniProtKB" id="O08561"/>
    </source>
</evidence>
<evidence type="ECO:0000250" key="3">
    <source>
        <dbReference type="UniProtKB" id="Q8BKC8"/>
    </source>
</evidence>
<evidence type="ECO:0000250" key="4">
    <source>
        <dbReference type="UniProtKB" id="Q9UBF8"/>
    </source>
</evidence>
<evidence type="ECO:0000255" key="5">
    <source>
        <dbReference type="PROSITE-ProRule" id="PRU00269"/>
    </source>
</evidence>
<evidence type="ECO:0000255" key="6">
    <source>
        <dbReference type="PROSITE-ProRule" id="PRU00878"/>
    </source>
</evidence>
<evidence type="ECO:0000256" key="7">
    <source>
        <dbReference type="SAM" id="MobiDB-lite"/>
    </source>
</evidence>
<evidence type="ECO:0000269" key="8">
    <source>
    </source>
</evidence>
<evidence type="ECO:0000269" key="9">
    <source>
    </source>
</evidence>
<evidence type="ECO:0000303" key="10">
    <source>
    </source>
</evidence>
<evidence type="ECO:0000305" key="11"/>
<evidence type="ECO:0000305" key="12">
    <source>
    </source>
</evidence>
<evidence type="ECO:0000312" key="13">
    <source>
        <dbReference type="EMBL" id="AAC48729.1"/>
    </source>
</evidence>
<evidence type="ECO:0007829" key="14">
    <source>
        <dbReference type="PDB" id="5EUQ"/>
    </source>
</evidence>
<dbReference type="EC" id="2.7.1.67" evidence="8 9"/>
<dbReference type="EMBL" id="U88531">
    <property type="protein sequence ID" value="AAC48729.1"/>
    <property type="molecule type" value="mRNA"/>
</dbReference>
<dbReference type="RefSeq" id="NP_777208.1">
    <molecule id="O02810-2"/>
    <property type="nucleotide sequence ID" value="NM_174783.2"/>
</dbReference>
<dbReference type="PDB" id="5EUQ">
    <property type="method" value="X-ray"/>
    <property type="resolution" value="3.20 A"/>
    <property type="chains" value="E=288-422"/>
</dbReference>
<dbReference type="PDBsum" id="5EUQ"/>
<dbReference type="SMR" id="O02810"/>
<dbReference type="FunCoup" id="O02810">
    <property type="interactions" value="4680"/>
</dbReference>
<dbReference type="STRING" id="9913.ENSBTAP00000009627"/>
<dbReference type="PaxDb" id="9913-ENSBTAP00000009627"/>
<dbReference type="GeneID" id="286846"/>
<dbReference type="KEGG" id="bta:286846"/>
<dbReference type="CTD" id="5298"/>
<dbReference type="eggNOG" id="KOG0903">
    <property type="taxonomic scope" value="Eukaryota"/>
</dbReference>
<dbReference type="InParanoid" id="O02810"/>
<dbReference type="OrthoDB" id="10264149at2759"/>
<dbReference type="Proteomes" id="UP000009136">
    <property type="component" value="Unplaced"/>
</dbReference>
<dbReference type="GO" id="GO:0005737">
    <property type="term" value="C:cytoplasm"/>
    <property type="evidence" value="ECO:0000318"/>
    <property type="project" value="GO_Central"/>
</dbReference>
<dbReference type="GO" id="GO:0000139">
    <property type="term" value="C:Golgi membrane"/>
    <property type="evidence" value="ECO:0007669"/>
    <property type="project" value="UniProtKB-SubCell"/>
</dbReference>
<dbReference type="GO" id="GO:0016020">
    <property type="term" value="C:membrane"/>
    <property type="evidence" value="ECO:0000318"/>
    <property type="project" value="GO_Central"/>
</dbReference>
<dbReference type="GO" id="GO:0005741">
    <property type="term" value="C:mitochondrial outer membrane"/>
    <property type="evidence" value="ECO:0007669"/>
    <property type="project" value="UniProtKB-SubCell"/>
</dbReference>
<dbReference type="GO" id="GO:0030867">
    <property type="term" value="C:rough endoplasmic reticulum membrane"/>
    <property type="evidence" value="ECO:0007669"/>
    <property type="project" value="UniProtKB-SubCell"/>
</dbReference>
<dbReference type="GO" id="GO:0004430">
    <property type="term" value="F:1-phosphatidylinositol 4-kinase activity"/>
    <property type="evidence" value="ECO:0000314"/>
    <property type="project" value="UniProtKB"/>
</dbReference>
<dbReference type="GO" id="GO:0071889">
    <property type="term" value="F:14-3-3 protein binding"/>
    <property type="evidence" value="ECO:0000250"/>
    <property type="project" value="UniProtKB"/>
</dbReference>
<dbReference type="GO" id="GO:0005524">
    <property type="term" value="F:ATP binding"/>
    <property type="evidence" value="ECO:0007669"/>
    <property type="project" value="UniProtKB-KW"/>
</dbReference>
<dbReference type="GO" id="GO:0048839">
    <property type="term" value="P:inner ear development"/>
    <property type="evidence" value="ECO:0000318"/>
    <property type="project" value="GO_Central"/>
</dbReference>
<dbReference type="GO" id="GO:0046854">
    <property type="term" value="P:phosphatidylinositol phosphate biosynthetic process"/>
    <property type="evidence" value="ECO:0000318"/>
    <property type="project" value="GO_Central"/>
</dbReference>
<dbReference type="GO" id="GO:0048015">
    <property type="term" value="P:phosphatidylinositol-mediated signaling"/>
    <property type="evidence" value="ECO:0000318"/>
    <property type="project" value="GO_Central"/>
</dbReference>
<dbReference type="CDD" id="cd22246">
    <property type="entry name" value="PI4KB_NTD"/>
    <property type="match status" value="1"/>
</dbReference>
<dbReference type="CDD" id="cd05168">
    <property type="entry name" value="PI4Kc_III_beta"/>
    <property type="match status" value="1"/>
</dbReference>
<dbReference type="FunFam" id="3.30.1010.10:FF:000031">
    <property type="entry name" value="Phosphatidylinositol 4-kinase beta"/>
    <property type="match status" value="1"/>
</dbReference>
<dbReference type="FunFam" id="1.10.1070.11:FF:000004">
    <property type="entry name" value="Phosphatidylinositol 4-kinase, catalytic, beta"/>
    <property type="match status" value="1"/>
</dbReference>
<dbReference type="Gene3D" id="1.10.1070.11">
    <property type="entry name" value="Phosphatidylinositol 3-/4-kinase, catalytic domain"/>
    <property type="match status" value="1"/>
</dbReference>
<dbReference type="Gene3D" id="3.30.1010.10">
    <property type="entry name" value="Phosphatidylinositol 3-kinase Catalytic Subunit, Chain A, domain 4"/>
    <property type="match status" value="1"/>
</dbReference>
<dbReference type="InterPro" id="IPR011009">
    <property type="entry name" value="Kinase-like_dom_sf"/>
</dbReference>
<dbReference type="InterPro" id="IPR000403">
    <property type="entry name" value="PI3/4_kinase_cat_dom"/>
</dbReference>
<dbReference type="InterPro" id="IPR036940">
    <property type="entry name" value="PI3/4_kinase_cat_sf"/>
</dbReference>
<dbReference type="InterPro" id="IPR018936">
    <property type="entry name" value="PI3/4_kinase_CS"/>
</dbReference>
<dbReference type="InterPro" id="IPR001263">
    <property type="entry name" value="PI3K_accessory_dom"/>
</dbReference>
<dbReference type="InterPro" id="IPR049160">
    <property type="entry name" value="PI4KB-PIK1_PIK"/>
</dbReference>
<dbReference type="InterPro" id="IPR015433">
    <property type="entry name" value="PI_Kinase"/>
</dbReference>
<dbReference type="PANTHER" id="PTHR10048:SF22">
    <property type="entry name" value="PHOSPHATIDYLINOSITOL 4-KINASE BETA"/>
    <property type="match status" value="1"/>
</dbReference>
<dbReference type="PANTHER" id="PTHR10048">
    <property type="entry name" value="PHOSPHATIDYLINOSITOL KINASE"/>
    <property type="match status" value="1"/>
</dbReference>
<dbReference type="Pfam" id="PF00454">
    <property type="entry name" value="PI3_PI4_kinase"/>
    <property type="match status" value="1"/>
</dbReference>
<dbReference type="Pfam" id="PF21245">
    <property type="entry name" value="PI4KB-PIK1_PIK"/>
    <property type="match status" value="1"/>
</dbReference>
<dbReference type="SMART" id="SM00146">
    <property type="entry name" value="PI3Kc"/>
    <property type="match status" value="1"/>
</dbReference>
<dbReference type="SUPFAM" id="SSF56112">
    <property type="entry name" value="Protein kinase-like (PK-like)"/>
    <property type="match status" value="1"/>
</dbReference>
<dbReference type="PROSITE" id="PS00915">
    <property type="entry name" value="PI3_4_KINASE_1"/>
    <property type="match status" value="1"/>
</dbReference>
<dbReference type="PROSITE" id="PS00916">
    <property type="entry name" value="PI3_4_KINASE_2"/>
    <property type="match status" value="1"/>
</dbReference>
<dbReference type="PROSITE" id="PS50290">
    <property type="entry name" value="PI3_4_KINASE_3"/>
    <property type="match status" value="1"/>
</dbReference>
<dbReference type="PROSITE" id="PS51545">
    <property type="entry name" value="PIK_HELICAL"/>
    <property type="match status" value="1"/>
</dbReference>
<protein>
    <recommendedName>
        <fullName>Phosphatidylinositol 4-kinase beta</fullName>
        <shortName>PI4K-beta</shortName>
        <shortName>PI4Kbeta</shortName>
        <shortName>PtdIns 4-kinase beta</shortName>
        <ecNumber evidence="8 9">2.7.1.67</ecNumber>
    </recommendedName>
</protein>
<gene>
    <name type="primary">PI4KB</name>
    <name type="synonym">PIK4CB</name>
</gene>
<proteinExistence type="evidence at protein level"/>
<organism evidence="13">
    <name type="scientific">Bos taurus</name>
    <name type="common">Bovine</name>
    <dbReference type="NCBI Taxonomy" id="9913"/>
    <lineage>
        <taxon>Eukaryota</taxon>
        <taxon>Metazoa</taxon>
        <taxon>Chordata</taxon>
        <taxon>Craniata</taxon>
        <taxon>Vertebrata</taxon>
        <taxon>Euteleostomi</taxon>
        <taxon>Mammalia</taxon>
        <taxon>Eutheria</taxon>
        <taxon>Laurasiatheria</taxon>
        <taxon>Artiodactyla</taxon>
        <taxon>Ruminantia</taxon>
        <taxon>Pecora</taxon>
        <taxon>Bovidae</taxon>
        <taxon>Bovinae</taxon>
        <taxon>Bos</taxon>
    </lineage>
</organism>
<keyword id="KW-0002">3D-structure</keyword>
<keyword id="KW-0007">Acetylation</keyword>
<keyword id="KW-0025">Alternative splicing</keyword>
<keyword id="KW-0067">ATP-binding</keyword>
<keyword id="KW-0903">Direct protein sequencing</keyword>
<keyword id="KW-0256">Endoplasmic reticulum</keyword>
<keyword id="KW-0333">Golgi apparatus</keyword>
<keyword id="KW-0418">Kinase</keyword>
<keyword id="KW-0443">Lipid metabolism</keyword>
<keyword id="KW-0472">Membrane</keyword>
<keyword id="KW-0496">Mitochondrion</keyword>
<keyword id="KW-1000">Mitochondrion outer membrane</keyword>
<keyword id="KW-0547">Nucleotide-binding</keyword>
<keyword id="KW-0597">Phosphoprotein</keyword>
<keyword id="KW-1185">Reference proteome</keyword>
<keyword id="KW-0808">Transferase</keyword>
<reference evidence="11" key="1">
    <citation type="journal article" date="1997" name="J. Biol. Chem.">
        <title>Isolation and molecular cloning of wortmannin-sensitive bovine type III phosphatidylinositol 4-kinases.</title>
        <authorList>
            <person name="Balla T."/>
            <person name="Downing G.J."/>
            <person name="Jaffe H."/>
            <person name="Kim S."/>
            <person name="Zolyomi A."/>
            <person name="Catt K.J."/>
        </authorList>
    </citation>
    <scope>NUCLEOTIDE SEQUENCE [MRNA] (ISOFORMS 1 AND 2)</scope>
    <scope>PROTEIN SEQUENCE OF 153-158; 298-303; 319-321; 327-330; 339-345; 497-507; 510-522 AND 581-589</scope>
    <scope>FUNCTION</scope>
    <scope>CATALYTIC ACTIVITY</scope>
    <scope>ACTIVITY REGULATION</scope>
    <source>
        <tissue evidence="9">Adrenal cortex</tissue>
    </source>
</reference>
<reference key="2">
    <citation type="journal article" date="2001" name="J. Biol. Chem.">
        <title>Interaction of neuronal calcium sensor-1 (NCS-1) with phosphatidylinositol 4-kinase beta stimulates lipid kinase activity and affects membrane trafficking in COS-7 cells.</title>
        <authorList>
            <person name="Zhao X."/>
            <person name="Varnai P."/>
            <person name="Tuymetova G."/>
            <person name="Balla A."/>
            <person name="Toth Z.E."/>
            <person name="Oker-Blom C."/>
            <person name="Roder J."/>
            <person name="Jeromin A."/>
            <person name="Balla T."/>
        </authorList>
    </citation>
    <scope>FUNCTION</scope>
    <scope>CATALYTIC ACTIVITY</scope>
    <scope>INTERACTION WITH NCS1</scope>
    <scope>ACTIVITY REGULATION</scope>
    <scope>SUBCELLULAR LOCATION</scope>
</reference>
<feature type="initiator methionine" description="Removed" evidence="4">
    <location>
        <position position="1"/>
    </location>
</feature>
<feature type="chain" id="PRO_0000088828" description="Phosphatidylinositol 4-kinase beta">
    <location>
        <begin position="2"/>
        <end position="816"/>
    </location>
</feature>
<feature type="domain" description="PIK helical" evidence="6">
    <location>
        <begin position="29"/>
        <end position="242"/>
    </location>
</feature>
<feature type="domain" description="PI3K/PI4K catalytic" evidence="5">
    <location>
        <begin position="535"/>
        <end position="801"/>
    </location>
</feature>
<feature type="region of interest" description="Disordered" evidence="7">
    <location>
        <begin position="1"/>
        <end position="30"/>
    </location>
</feature>
<feature type="region of interest" description="Interaction with ACBD3" evidence="4">
    <location>
        <begin position="2"/>
        <end position="68"/>
    </location>
</feature>
<feature type="region of interest" description="Disordered" evidence="7">
    <location>
        <begin position="101"/>
        <end position="120"/>
    </location>
</feature>
<feature type="region of interest" description="Disordered" evidence="7">
    <location>
        <begin position="248"/>
        <end position="318"/>
    </location>
</feature>
<feature type="region of interest" description="G-loop" evidence="5">
    <location>
        <begin position="541"/>
        <end position="547"/>
    </location>
</feature>
<feature type="region of interest" description="Catalytic loop" evidence="5">
    <location>
        <begin position="668"/>
        <end position="676"/>
    </location>
</feature>
<feature type="region of interest" description="Activation loop" evidence="5">
    <location>
        <begin position="687"/>
        <end position="711"/>
    </location>
</feature>
<feature type="compositionally biased region" description="Polar residues" evidence="7">
    <location>
        <begin position="278"/>
        <end position="297"/>
    </location>
</feature>
<feature type="compositionally biased region" description="Polar residues" evidence="7">
    <location>
        <begin position="306"/>
        <end position="318"/>
    </location>
</feature>
<feature type="modified residue" description="N-acetylglycine" evidence="4">
    <location>
        <position position="2"/>
    </location>
</feature>
<feature type="modified residue" description="Phosphoserine" evidence="4">
    <location>
        <position position="258"/>
    </location>
</feature>
<feature type="modified residue" description="Phosphothreonine" evidence="4">
    <location>
        <position position="263"/>
    </location>
</feature>
<feature type="modified residue" description="Phosphoserine" evidence="4">
    <location>
        <position position="266"/>
    </location>
</feature>
<feature type="modified residue" description="Phosphoserine" evidence="3">
    <location>
        <position position="275"/>
    </location>
</feature>
<feature type="modified residue" description="Phosphoserine" evidence="4">
    <location>
        <position position="277"/>
    </location>
</feature>
<feature type="modified residue" description="Phosphoserine" evidence="3">
    <location>
        <position position="284"/>
    </location>
</feature>
<feature type="modified residue" description="Phosphoserine" evidence="4">
    <location>
        <position position="294"/>
    </location>
</feature>
<feature type="modified residue" description="Phosphoserine" evidence="4">
    <location>
        <position position="428"/>
    </location>
</feature>
<feature type="modified residue" description="Phosphothreonine" evidence="4">
    <location>
        <position position="438"/>
    </location>
</feature>
<feature type="modified residue" description="Phosphoserine" evidence="4">
    <location>
        <position position="511"/>
    </location>
</feature>
<feature type="modified residue" description="Phosphothreonine" evidence="4">
    <location>
        <position position="517"/>
    </location>
</feature>
<feature type="modified residue" description="Phosphothreonine" evidence="4">
    <location>
        <position position="519"/>
    </location>
</feature>
<feature type="splice variant" id="VSP_050628" description="In isoform 2." evidence="10">
    <location>
        <begin position="304"/>
        <end position="318"/>
    </location>
</feature>
<feature type="helix" evidence="14">
    <location>
        <begin position="129"/>
        <end position="134"/>
    </location>
</feature>
<feature type="helix" evidence="14">
    <location>
        <begin position="141"/>
        <end position="150"/>
    </location>
</feature>
<feature type="helix" evidence="14">
    <location>
        <begin position="154"/>
        <end position="163"/>
    </location>
</feature>
<feature type="helix" evidence="14">
    <location>
        <begin position="164"/>
        <end position="166"/>
    </location>
</feature>
<feature type="helix" evidence="14">
    <location>
        <begin position="169"/>
        <end position="173"/>
    </location>
</feature>
<feature type="helix" evidence="14">
    <location>
        <begin position="176"/>
        <end position="184"/>
    </location>
</feature>
<feature type="helix" evidence="14">
    <location>
        <begin position="188"/>
        <end position="204"/>
    </location>
</feature>
<feature type="helix" evidence="14">
    <location>
        <begin position="206"/>
        <end position="218"/>
    </location>
</feature>
<feature type="helix" evidence="14">
    <location>
        <begin position="234"/>
        <end position="240"/>
    </location>
</feature>
<feature type="helix" evidence="14">
    <location>
        <begin position="323"/>
        <end position="337"/>
    </location>
</feature>
<feature type="helix" evidence="14">
    <location>
        <begin position="338"/>
        <end position="340"/>
    </location>
</feature>
<feature type="helix" evidence="14">
    <location>
        <begin position="345"/>
        <end position="357"/>
    </location>
</feature>
<feature type="helix" evidence="14">
    <location>
        <begin position="359"/>
        <end position="362"/>
    </location>
</feature>
<feature type="strand" evidence="14">
    <location>
        <begin position="364"/>
        <end position="366"/>
    </location>
</feature>
<feature type="strand" evidence="14">
    <location>
        <begin position="372"/>
        <end position="374"/>
    </location>
</feature>
<feature type="strand" evidence="14">
    <location>
        <begin position="376"/>
        <end position="380"/>
    </location>
</feature>
<feature type="helix" evidence="14">
    <location>
        <begin position="383"/>
        <end position="385"/>
    </location>
</feature>
<feature type="strand" evidence="14">
    <location>
        <begin position="397"/>
        <end position="405"/>
    </location>
</feature>
<feature type="turn" evidence="14">
    <location>
        <begin position="409"/>
        <end position="411"/>
    </location>
</feature>
<feature type="helix" evidence="14">
    <location>
        <begin position="537"/>
        <end position="546"/>
    </location>
</feature>
<feature type="strand" evidence="14">
    <location>
        <begin position="556"/>
        <end position="566"/>
    </location>
</feature>
<feature type="helix" evidence="14">
    <location>
        <begin position="570"/>
        <end position="588"/>
    </location>
</feature>
<feature type="strand" evidence="14">
    <location>
        <begin position="600"/>
        <end position="603"/>
    </location>
</feature>
<feature type="strand" evidence="14">
    <location>
        <begin position="608"/>
        <end position="610"/>
    </location>
</feature>
<feature type="strand" evidence="14">
    <location>
        <begin position="614"/>
        <end position="618"/>
    </location>
</feature>
<feature type="helix" evidence="14">
    <location>
        <begin position="619"/>
        <end position="626"/>
    </location>
</feature>
<feature type="helix" evidence="14">
    <location>
        <begin position="630"/>
        <end position="637"/>
    </location>
</feature>
<feature type="helix" evidence="14">
    <location>
        <begin position="644"/>
        <end position="662"/>
    </location>
</feature>
<sequence length="816" mass="91375">MGDTIVEPAPLKPTSEPAPGPPGNNGGSLLSVITEGVGELSVIDPEVAQKACQEVLEKVKLLHGGVAISSRGTPLELVNGDGVDSEIRCLDDPPAQIREEEDEMGATVASGTAKGARRRRQNNSAKQSWLLRLFESKLFDISMAISYLYNSKEPGVQAYIGNRLFCFRNEDVDFYLPQLLNMYIHMDEDVGDAIKPYIVHRCRQSINFSLQCALLLGAYSSDMHISTQRHSRGTKLRKLILSDELKPAHRKRELPSLSPAPDTGLSPSKRTHQRSKSDATASISLSSNLKRTASNPKVENEDEELSSSTESIDNSFSSPVRLAPEREFIKSLMAIGKRLATLPTKEQKTQRLISELSLLNHKLPARVWLPTAGFDHHVVRVPHTQAVVLNSKDKAPYLIYVEVLECENFDTTSVPARIPENRIRSTRSVENLPECGITHEQRAGSFSTVPNYDNDDEAWSVDDIGELQVELPEVHTNSCDNISQFSVDSITSQESKEPVFIAAGDIRRRLSEQLAHTPTAFKRDPEDPSAVALKEPWQEKVRRIREGSPYGHLPNWRLLSVIVKCGDDLRQELLAFQVLKQLQSIWEQERVPLWIKPYKILVISADSGMIEPVVNAVSIHQVKKQSQLSLLDYFLQEHGSYTTEAFLSAQRNFVQSCAGYCLGCYLLQVKDRHNGNILLDAEGHIIHIDFGFILSSSPRNLGFETSAFKLTTEFVDVMGGLDGDMFNYYKMLMLQGLIAARKHMDKVVQIVEIMQQGSQLPCFHGSSTIRNLKERFHMSMTEEQLQLLVEQMVDGSMRSITTKLYDGFQYLTNGIM</sequence>
<comment type="function">
    <text evidence="2 4 8 9">Phosphorylates phosphatidylinositol (PI) in the first committed step in the production of the second messenger inositol-1,4,5,-trisphosphate (PIP) (PubMed:11526106, PubMed:9218477). May regulate Golgi disintegration/reorganization during mitosis, possibly via its phosphorylation (By similarity). Involved in Golgi-to-plasma membrane trafficking (By similarity).</text>
</comment>
<comment type="catalytic activity">
    <reaction evidence="8 9">
        <text>a 1,2-diacyl-sn-glycero-3-phospho-(1D-myo-inositol) + ATP = a 1,2-diacyl-sn-glycero-3-phospho-(1D-myo-inositol 4-phosphate) + ADP + H(+)</text>
        <dbReference type="Rhea" id="RHEA:19877"/>
        <dbReference type="ChEBI" id="CHEBI:15378"/>
        <dbReference type="ChEBI" id="CHEBI:30616"/>
        <dbReference type="ChEBI" id="CHEBI:57880"/>
        <dbReference type="ChEBI" id="CHEBI:58178"/>
        <dbReference type="ChEBI" id="CHEBI:456216"/>
        <dbReference type="EC" id="2.7.1.67"/>
    </reaction>
    <physiologicalReaction direction="left-to-right" evidence="12">
        <dbReference type="Rhea" id="RHEA:19878"/>
    </physiologicalReaction>
</comment>
<comment type="cofactor">
    <cofactor evidence="4">
        <name>Mg(2+)</name>
        <dbReference type="ChEBI" id="CHEBI:18420"/>
    </cofactor>
    <cofactor evidence="4">
        <name>Mn(2+)</name>
        <dbReference type="ChEBI" id="CHEBI:29035"/>
    </cofactor>
</comment>
<comment type="activity regulation">
    <text evidence="8 9">Inhibited by wortmannin. Increased kinase activity upon interaction with NCS1/FREQ.</text>
</comment>
<comment type="subunit">
    <text evidence="4 8">Interacts with ARF1 and ARF3 in the Golgi complex, but not with ARF4, ARF5 or ARF6 (By similarity). Interacts with NCS1/FREQ in a calcium-independent manner. Interacts with CALN1/CABP8 and CALN2/CABP7; in a calcium-dependent manner; this interaction competes with NCS1/FREQ binding (PubMed:11526106). Interacts with ACBD3. Interacts with ARMH3, YWHAB, YWHAE, YWHAG, YWHAH, YWHAQ, YWHAZ and SFN (By similarity). Interacts with GGA2 (via VHS domain); the interaction is important for PI4KB location at the Golgi apparatus membrane (By similarity). Interacts with ATG9A (By similarity).</text>
</comment>
<comment type="subcellular location">
    <subcellularLocation>
        <location evidence="1">Endomembrane system</location>
    </subcellularLocation>
    <subcellularLocation>
        <location evidence="1">Mitochondrion outer membrane</location>
        <topology evidence="1">Peripheral membrane protein</topology>
    </subcellularLocation>
    <subcellularLocation>
        <location evidence="1">Rough endoplasmic reticulum membrane</location>
        <topology evidence="1">Peripheral membrane protein</topology>
    </subcellularLocation>
    <subcellularLocation>
        <location evidence="8">Golgi apparatus</location>
    </subcellularLocation>
    <subcellularLocation>
        <location evidence="4">Golgi apparatus membrane</location>
    </subcellularLocation>
    <text evidence="4">Found in the outer membrane of mitochondria and membranes of the rough endoplasmic reticulum. Recruited to the Golgi complex by the small GTPase ARF to stimulate the synthesis of phosphatidylinositol 4,5-bisphosphate (PIP2) on the Golgi complex. Recruited to the Golgi apparatus membrane by ACBD3, GGA2 is also involved in the recruitment.</text>
</comment>
<comment type="alternative products">
    <event type="alternative splicing"/>
    <isoform>
        <id>O02810-1</id>
        <name evidence="9">1</name>
        <sequence type="displayed"/>
    </isoform>
    <isoform>
        <id>O02810-2</id>
        <name evidence="9">2</name>
        <sequence type="described" ref="VSP_050628"/>
    </isoform>
</comment>
<comment type="similarity">
    <text evidence="11">Belongs to the PI3/PI4-kinase family. Type III PI4K subfamily.</text>
</comment>
<accession>O02810</accession>
<name>PI4KB_BOVIN</name>